<comment type="function">
    <text evidence="1">ATP-dependent serine protease that mediates the selective degradation of mutant and abnormal proteins as well as certain short-lived regulatory proteins. Required for cellular homeostasis and for survival from DNA damage and developmental changes induced by stress. Degrades polypeptides processively to yield small peptide fragments that are 5 to 10 amino acids long. Binds to DNA in a double-stranded, site-specific manner.</text>
</comment>
<comment type="catalytic activity">
    <reaction evidence="1">
        <text>Hydrolysis of proteins in presence of ATP.</text>
        <dbReference type="EC" id="3.4.21.53"/>
    </reaction>
</comment>
<comment type="subunit">
    <text evidence="1">Homohexamer. Organized in a ring with a central cavity.</text>
</comment>
<comment type="subcellular location">
    <subcellularLocation>
        <location evidence="1">Cytoplasm</location>
    </subcellularLocation>
</comment>
<comment type="induction">
    <text evidence="1">By heat shock.</text>
</comment>
<comment type="similarity">
    <text evidence="1">Belongs to the peptidase S16 family.</text>
</comment>
<protein>
    <recommendedName>
        <fullName evidence="1">Lon protease</fullName>
        <ecNumber evidence="1">3.4.21.53</ecNumber>
    </recommendedName>
    <alternativeName>
        <fullName evidence="1">ATP-dependent protease La</fullName>
    </alternativeName>
</protein>
<feature type="chain" id="PRO_0000280891" description="Lon protease">
    <location>
        <begin position="1"/>
        <end position="775"/>
    </location>
</feature>
<feature type="domain" description="Lon N-terminal" evidence="3">
    <location>
        <begin position="6"/>
        <end position="207"/>
    </location>
</feature>
<feature type="domain" description="Lon proteolytic" evidence="2">
    <location>
        <begin position="592"/>
        <end position="773"/>
    </location>
</feature>
<feature type="active site" evidence="1">
    <location>
        <position position="679"/>
    </location>
</feature>
<feature type="active site" evidence="1">
    <location>
        <position position="722"/>
    </location>
</feature>
<feature type="binding site" evidence="1">
    <location>
        <begin position="356"/>
        <end position="363"/>
    </location>
    <ligand>
        <name>ATP</name>
        <dbReference type="ChEBI" id="CHEBI:30616"/>
    </ligand>
</feature>
<organism>
    <name type="scientific">Rickettsia bellii (strain RML369-C)</name>
    <dbReference type="NCBI Taxonomy" id="336407"/>
    <lineage>
        <taxon>Bacteria</taxon>
        <taxon>Pseudomonadati</taxon>
        <taxon>Pseudomonadota</taxon>
        <taxon>Alphaproteobacteria</taxon>
        <taxon>Rickettsiales</taxon>
        <taxon>Rickettsiaceae</taxon>
        <taxon>Rickettsieae</taxon>
        <taxon>Rickettsia</taxon>
        <taxon>belli group</taxon>
    </lineage>
</organism>
<reference key="1">
    <citation type="journal article" date="2006" name="PLoS Genet.">
        <title>Genome sequence of Rickettsia bellii illuminates the role of amoebae in gene exchanges between intracellular pathogens.</title>
        <authorList>
            <person name="Ogata H."/>
            <person name="La Scola B."/>
            <person name="Audic S."/>
            <person name="Renesto P."/>
            <person name="Blanc G."/>
            <person name="Robert C."/>
            <person name="Fournier P.-E."/>
            <person name="Claverie J.-M."/>
            <person name="Raoult D."/>
        </authorList>
    </citation>
    <scope>NUCLEOTIDE SEQUENCE [LARGE SCALE GENOMIC DNA]</scope>
    <source>
        <strain>RML369-C</strain>
    </source>
</reference>
<dbReference type="EC" id="3.4.21.53" evidence="1"/>
<dbReference type="EMBL" id="CP000087">
    <property type="protein sequence ID" value="ABE04878.1"/>
    <property type="molecule type" value="Genomic_DNA"/>
</dbReference>
<dbReference type="RefSeq" id="WP_011477465.1">
    <property type="nucleotide sequence ID" value="NC_007940.1"/>
</dbReference>
<dbReference type="SMR" id="Q1RID6"/>
<dbReference type="MEROPS" id="S16.001"/>
<dbReference type="KEGG" id="rbe:RBE_0797"/>
<dbReference type="eggNOG" id="COG0466">
    <property type="taxonomic scope" value="Bacteria"/>
</dbReference>
<dbReference type="HOGENOM" id="CLU_004109_4_3_5"/>
<dbReference type="OrthoDB" id="9803599at2"/>
<dbReference type="Proteomes" id="UP000001951">
    <property type="component" value="Chromosome"/>
</dbReference>
<dbReference type="GO" id="GO:0005737">
    <property type="term" value="C:cytoplasm"/>
    <property type="evidence" value="ECO:0007669"/>
    <property type="project" value="UniProtKB-SubCell"/>
</dbReference>
<dbReference type="GO" id="GO:0005524">
    <property type="term" value="F:ATP binding"/>
    <property type="evidence" value="ECO:0007669"/>
    <property type="project" value="UniProtKB-UniRule"/>
</dbReference>
<dbReference type="GO" id="GO:0016887">
    <property type="term" value="F:ATP hydrolysis activity"/>
    <property type="evidence" value="ECO:0007669"/>
    <property type="project" value="UniProtKB-UniRule"/>
</dbReference>
<dbReference type="GO" id="GO:0004176">
    <property type="term" value="F:ATP-dependent peptidase activity"/>
    <property type="evidence" value="ECO:0007669"/>
    <property type="project" value="UniProtKB-UniRule"/>
</dbReference>
<dbReference type="GO" id="GO:0043565">
    <property type="term" value="F:sequence-specific DNA binding"/>
    <property type="evidence" value="ECO:0007669"/>
    <property type="project" value="UniProtKB-UniRule"/>
</dbReference>
<dbReference type="GO" id="GO:0004252">
    <property type="term" value="F:serine-type endopeptidase activity"/>
    <property type="evidence" value="ECO:0007669"/>
    <property type="project" value="UniProtKB-UniRule"/>
</dbReference>
<dbReference type="GO" id="GO:0034605">
    <property type="term" value="P:cellular response to heat"/>
    <property type="evidence" value="ECO:0007669"/>
    <property type="project" value="UniProtKB-UniRule"/>
</dbReference>
<dbReference type="GO" id="GO:0006515">
    <property type="term" value="P:protein quality control for misfolded or incompletely synthesized proteins"/>
    <property type="evidence" value="ECO:0007669"/>
    <property type="project" value="UniProtKB-UniRule"/>
</dbReference>
<dbReference type="CDD" id="cd19500">
    <property type="entry name" value="RecA-like_Lon"/>
    <property type="match status" value="1"/>
</dbReference>
<dbReference type="FunFam" id="1.20.5.5270:FF:000002">
    <property type="entry name" value="Lon protease homolog"/>
    <property type="match status" value="1"/>
</dbReference>
<dbReference type="FunFam" id="3.40.50.300:FF:000021">
    <property type="entry name" value="Lon protease homolog"/>
    <property type="match status" value="1"/>
</dbReference>
<dbReference type="Gene3D" id="1.10.8.60">
    <property type="match status" value="1"/>
</dbReference>
<dbReference type="Gene3D" id="1.20.5.5270">
    <property type="match status" value="1"/>
</dbReference>
<dbReference type="Gene3D" id="1.20.58.1480">
    <property type="match status" value="1"/>
</dbReference>
<dbReference type="Gene3D" id="3.30.230.10">
    <property type="match status" value="1"/>
</dbReference>
<dbReference type="Gene3D" id="2.30.130.40">
    <property type="entry name" value="LON domain-like"/>
    <property type="match status" value="1"/>
</dbReference>
<dbReference type="Gene3D" id="3.40.50.300">
    <property type="entry name" value="P-loop containing nucleotide triphosphate hydrolases"/>
    <property type="match status" value="1"/>
</dbReference>
<dbReference type="HAMAP" id="MF_01973">
    <property type="entry name" value="lon_bact"/>
    <property type="match status" value="1"/>
</dbReference>
<dbReference type="InterPro" id="IPR003593">
    <property type="entry name" value="AAA+_ATPase"/>
</dbReference>
<dbReference type="InterPro" id="IPR003959">
    <property type="entry name" value="ATPase_AAA_core"/>
</dbReference>
<dbReference type="InterPro" id="IPR027543">
    <property type="entry name" value="Lon_bac"/>
</dbReference>
<dbReference type="InterPro" id="IPR004815">
    <property type="entry name" value="Lon_bac/euk-typ"/>
</dbReference>
<dbReference type="InterPro" id="IPR054594">
    <property type="entry name" value="Lon_lid"/>
</dbReference>
<dbReference type="InterPro" id="IPR008269">
    <property type="entry name" value="Lon_proteolytic"/>
</dbReference>
<dbReference type="InterPro" id="IPR027065">
    <property type="entry name" value="Lon_Prtase"/>
</dbReference>
<dbReference type="InterPro" id="IPR003111">
    <property type="entry name" value="Lon_prtase_N"/>
</dbReference>
<dbReference type="InterPro" id="IPR046336">
    <property type="entry name" value="Lon_prtase_N_sf"/>
</dbReference>
<dbReference type="InterPro" id="IPR027417">
    <property type="entry name" value="P-loop_NTPase"/>
</dbReference>
<dbReference type="InterPro" id="IPR008268">
    <property type="entry name" value="Peptidase_S16_AS"/>
</dbReference>
<dbReference type="InterPro" id="IPR015947">
    <property type="entry name" value="PUA-like_sf"/>
</dbReference>
<dbReference type="InterPro" id="IPR020568">
    <property type="entry name" value="Ribosomal_Su5_D2-typ_SF"/>
</dbReference>
<dbReference type="InterPro" id="IPR014721">
    <property type="entry name" value="Ribsml_uS5_D2-typ_fold_subgr"/>
</dbReference>
<dbReference type="NCBIfam" id="TIGR00763">
    <property type="entry name" value="lon"/>
    <property type="match status" value="1"/>
</dbReference>
<dbReference type="NCBIfam" id="NF008053">
    <property type="entry name" value="PRK10787.1"/>
    <property type="match status" value="1"/>
</dbReference>
<dbReference type="PANTHER" id="PTHR10046">
    <property type="entry name" value="ATP DEPENDENT LON PROTEASE FAMILY MEMBER"/>
    <property type="match status" value="1"/>
</dbReference>
<dbReference type="Pfam" id="PF00004">
    <property type="entry name" value="AAA"/>
    <property type="match status" value="1"/>
</dbReference>
<dbReference type="Pfam" id="PF05362">
    <property type="entry name" value="Lon_C"/>
    <property type="match status" value="1"/>
</dbReference>
<dbReference type="Pfam" id="PF22667">
    <property type="entry name" value="Lon_lid"/>
    <property type="match status" value="1"/>
</dbReference>
<dbReference type="Pfam" id="PF02190">
    <property type="entry name" value="LON_substr_bdg"/>
    <property type="match status" value="1"/>
</dbReference>
<dbReference type="PIRSF" id="PIRSF001174">
    <property type="entry name" value="Lon_proteas"/>
    <property type="match status" value="1"/>
</dbReference>
<dbReference type="PRINTS" id="PR00830">
    <property type="entry name" value="ENDOLAPTASE"/>
</dbReference>
<dbReference type="SMART" id="SM00382">
    <property type="entry name" value="AAA"/>
    <property type="match status" value="1"/>
</dbReference>
<dbReference type="SMART" id="SM00464">
    <property type="entry name" value="LON"/>
    <property type="match status" value="1"/>
</dbReference>
<dbReference type="SUPFAM" id="SSF52540">
    <property type="entry name" value="P-loop containing nucleoside triphosphate hydrolases"/>
    <property type="match status" value="1"/>
</dbReference>
<dbReference type="SUPFAM" id="SSF88697">
    <property type="entry name" value="PUA domain-like"/>
    <property type="match status" value="1"/>
</dbReference>
<dbReference type="SUPFAM" id="SSF54211">
    <property type="entry name" value="Ribosomal protein S5 domain 2-like"/>
    <property type="match status" value="1"/>
</dbReference>
<dbReference type="PROSITE" id="PS51787">
    <property type="entry name" value="LON_N"/>
    <property type="match status" value="1"/>
</dbReference>
<dbReference type="PROSITE" id="PS51786">
    <property type="entry name" value="LON_PROTEOLYTIC"/>
    <property type="match status" value="1"/>
</dbReference>
<dbReference type="PROSITE" id="PS01046">
    <property type="entry name" value="LON_SER"/>
    <property type="match status" value="1"/>
</dbReference>
<proteinExistence type="inferred from homology"/>
<accession>Q1RID6</accession>
<sequence>MNKKSLPLMALRDIVVFPGVIAPVFVGRQKSLHALSNTTLSEEDNSKYILVTLQKKFDQENPNRNELYDVGILAKVIQIVKLPNTTAKILVEAIARVKISNIKGDEAFEANYEIIPDEEIFDANNMRSLVDNAVQLFAKYAGSDKKINAEIIETINKEISETSNFINIINILASHLITSLEEKQRLLEETSPFKRISTIINILTSNIVNSETEQALQQRVKKQIEKTQRDYYLHEQMKAIQKELDEDKSDLAEFDKKIKAAKLSKEAREKAEAELKKLRTMNQMSAESGVTRNYLETLLSLPWGKYDNSKIDINQAEKILNRDHFGLEKVKERIIEYLAVLQRSSKIRGPILCLIGPPGVGKTSLIKSIAEGMGRKYTKFALGGVRDEAEIRGHRKTYLGSMPGKILTQLKKVKTSNPVMLLDEIDKMGSDFRGDPASALLEVLDPEQNSHFVDHYLEVEYDLSNVIFIATANSYNLPRALIDRMEIIDISGYMEEEKIQIAKNYLVPKQLKMHKIKKDEITISDDAILDLIRYYTKESGVRSLEREIGALTRKALKQILADKKVKHISVDSNNLEEFLGARKYNFGLAEKNDQIGSTTGLAYTEVGGELLTIEALSFPGKGEIKTTGKLGDVMKESAMAAYSCFRSRAADFGLKYEDYKDFDVHIHVPAGAIPKDGPSAGCALFTTIVSLMTKIPVRRTVAMTGEVTLRGNVLPIGGLKEKLLAASRGGIKTVLIPEENVKDLKDIPPNIKSSLEIIPVSNIDQVLEHALTKKT</sequence>
<evidence type="ECO:0000255" key="1">
    <source>
        <dbReference type="HAMAP-Rule" id="MF_01973"/>
    </source>
</evidence>
<evidence type="ECO:0000255" key="2">
    <source>
        <dbReference type="PROSITE-ProRule" id="PRU01122"/>
    </source>
</evidence>
<evidence type="ECO:0000255" key="3">
    <source>
        <dbReference type="PROSITE-ProRule" id="PRU01123"/>
    </source>
</evidence>
<keyword id="KW-0067">ATP-binding</keyword>
<keyword id="KW-0963">Cytoplasm</keyword>
<keyword id="KW-0378">Hydrolase</keyword>
<keyword id="KW-0547">Nucleotide-binding</keyword>
<keyword id="KW-0645">Protease</keyword>
<keyword id="KW-0720">Serine protease</keyword>
<keyword id="KW-0346">Stress response</keyword>
<name>LON_RICBR</name>
<gene>
    <name evidence="1" type="primary">lon</name>
    <name type="ordered locus">RBE_0797</name>
</gene>